<comment type="function">
    <text evidence="1">Catalyzes the last two steps in the biosynthesis of 5-methylaminomethyl-2-thiouridine (mnm(5)s(2)U) at the wobble position (U34) in tRNA. Catalyzes the FAD-dependent demodification of cmnm(5)s(2)U34 to nm(5)s(2)U34, followed by the transfer of a methyl group from S-adenosyl-L-methionine to nm(5)s(2)U34, to form mnm(5)s(2)U34.</text>
</comment>
<comment type="catalytic activity">
    <reaction evidence="1">
        <text>5-aminomethyl-2-thiouridine(34) in tRNA + S-adenosyl-L-methionine = 5-methylaminomethyl-2-thiouridine(34) in tRNA + S-adenosyl-L-homocysteine + H(+)</text>
        <dbReference type="Rhea" id="RHEA:19569"/>
        <dbReference type="Rhea" id="RHEA-COMP:10195"/>
        <dbReference type="Rhea" id="RHEA-COMP:10197"/>
        <dbReference type="ChEBI" id="CHEBI:15378"/>
        <dbReference type="ChEBI" id="CHEBI:57856"/>
        <dbReference type="ChEBI" id="CHEBI:59789"/>
        <dbReference type="ChEBI" id="CHEBI:74454"/>
        <dbReference type="ChEBI" id="CHEBI:74455"/>
        <dbReference type="EC" id="2.1.1.61"/>
    </reaction>
</comment>
<comment type="cofactor">
    <cofactor evidence="1">
        <name>FAD</name>
        <dbReference type="ChEBI" id="CHEBI:57692"/>
    </cofactor>
</comment>
<comment type="subcellular location">
    <subcellularLocation>
        <location evidence="1">Cytoplasm</location>
    </subcellularLocation>
</comment>
<comment type="similarity">
    <text evidence="1">In the N-terminal section; belongs to the methyltransferase superfamily. tRNA (mnm(5)s(2)U34)-methyltransferase family.</text>
</comment>
<comment type="similarity">
    <text evidence="1">In the C-terminal section; belongs to the DAO family.</text>
</comment>
<feature type="chain" id="PRO_0000347967" description="tRNA 5-methylaminomethyl-2-thiouridine biosynthesis bifunctional protein MnmC">
    <location>
        <begin position="1"/>
        <end position="621"/>
    </location>
</feature>
<feature type="region of interest" description="tRNA (mnm(5)s(2)U34)-methyltransferase">
    <location>
        <begin position="1"/>
        <end position="222"/>
    </location>
</feature>
<feature type="region of interest" description="FAD-dependent cmnm(5)s(2)U34 oxidoreductase">
    <location>
        <begin position="250"/>
        <end position="621"/>
    </location>
</feature>
<dbReference type="EC" id="2.1.1.61" evidence="1"/>
<dbReference type="EC" id="1.5.-.-" evidence="1"/>
<dbReference type="EMBL" id="CP000792">
    <property type="protein sequence ID" value="EAT99238.1"/>
    <property type="molecule type" value="Genomic_DNA"/>
</dbReference>
<dbReference type="RefSeq" id="WP_012140226.1">
    <property type="nucleotide sequence ID" value="NC_009802.2"/>
</dbReference>
<dbReference type="SMR" id="A7ZEX8"/>
<dbReference type="STRING" id="360104.CCC13826_0496"/>
<dbReference type="KEGG" id="cco:CCC13826_0496"/>
<dbReference type="eggNOG" id="COG0665">
    <property type="taxonomic scope" value="Bacteria"/>
</dbReference>
<dbReference type="eggNOG" id="COG4121">
    <property type="taxonomic scope" value="Bacteria"/>
</dbReference>
<dbReference type="HOGENOM" id="CLU_022427_2_1_7"/>
<dbReference type="OrthoDB" id="9786494at2"/>
<dbReference type="Proteomes" id="UP000001121">
    <property type="component" value="Chromosome"/>
</dbReference>
<dbReference type="GO" id="GO:0005737">
    <property type="term" value="C:cytoplasm"/>
    <property type="evidence" value="ECO:0007669"/>
    <property type="project" value="UniProtKB-SubCell"/>
</dbReference>
<dbReference type="GO" id="GO:0016645">
    <property type="term" value="F:oxidoreductase activity, acting on the CH-NH group of donors"/>
    <property type="evidence" value="ECO:0007669"/>
    <property type="project" value="InterPro"/>
</dbReference>
<dbReference type="GO" id="GO:0004808">
    <property type="term" value="F:tRNA (5-methylaminomethyl-2-thiouridylate)(34)-methyltransferase activity"/>
    <property type="evidence" value="ECO:0007669"/>
    <property type="project" value="UniProtKB-EC"/>
</dbReference>
<dbReference type="GO" id="GO:0032259">
    <property type="term" value="P:methylation"/>
    <property type="evidence" value="ECO:0007669"/>
    <property type="project" value="UniProtKB-KW"/>
</dbReference>
<dbReference type="GO" id="GO:0008033">
    <property type="term" value="P:tRNA processing"/>
    <property type="evidence" value="ECO:0007669"/>
    <property type="project" value="UniProtKB-KW"/>
</dbReference>
<dbReference type="Gene3D" id="3.30.9.10">
    <property type="entry name" value="D-Amino Acid Oxidase, subunit A, domain 2"/>
    <property type="match status" value="1"/>
</dbReference>
<dbReference type="Gene3D" id="3.50.50.60">
    <property type="entry name" value="FAD/NAD(P)-binding domain"/>
    <property type="match status" value="1"/>
</dbReference>
<dbReference type="Gene3D" id="3.40.50.150">
    <property type="entry name" value="Vaccinia Virus protein VP39"/>
    <property type="match status" value="1"/>
</dbReference>
<dbReference type="HAMAP" id="MF_01102">
    <property type="entry name" value="MnmC"/>
    <property type="match status" value="1"/>
</dbReference>
<dbReference type="InterPro" id="IPR006076">
    <property type="entry name" value="FAD-dep_OxRdtase"/>
</dbReference>
<dbReference type="InterPro" id="IPR036188">
    <property type="entry name" value="FAD/NAD-bd_sf"/>
</dbReference>
<dbReference type="InterPro" id="IPR008471">
    <property type="entry name" value="MnmC-like_methylTransf"/>
</dbReference>
<dbReference type="InterPro" id="IPR029063">
    <property type="entry name" value="SAM-dependent_MTases_sf"/>
</dbReference>
<dbReference type="InterPro" id="IPR023032">
    <property type="entry name" value="tRNA_MAMT_biosynth_bifunc_MnmC"/>
</dbReference>
<dbReference type="InterPro" id="IPR047785">
    <property type="entry name" value="tRNA_MNMC2"/>
</dbReference>
<dbReference type="InterPro" id="IPR017610">
    <property type="entry name" value="tRNA_S-uridine_synth_MnmC_C"/>
</dbReference>
<dbReference type="NCBIfam" id="TIGR03197">
    <property type="entry name" value="MnmC_Cterm"/>
    <property type="match status" value="1"/>
</dbReference>
<dbReference type="NCBIfam" id="NF002481">
    <property type="entry name" value="PRK01747.1-2"/>
    <property type="match status" value="1"/>
</dbReference>
<dbReference type="NCBIfam" id="NF033855">
    <property type="entry name" value="tRNA_MNMC2"/>
    <property type="match status" value="1"/>
</dbReference>
<dbReference type="PANTHER" id="PTHR13847">
    <property type="entry name" value="SARCOSINE DEHYDROGENASE-RELATED"/>
    <property type="match status" value="1"/>
</dbReference>
<dbReference type="PANTHER" id="PTHR13847:SF283">
    <property type="entry name" value="TRNA 5-METHYLAMINOMETHYL-2-THIOURIDINE BIOSYNTHESIS BIFUNCTIONAL PROTEIN MNMC"/>
    <property type="match status" value="1"/>
</dbReference>
<dbReference type="Pfam" id="PF01266">
    <property type="entry name" value="DAO"/>
    <property type="match status" value="1"/>
</dbReference>
<dbReference type="Pfam" id="PF05430">
    <property type="entry name" value="Methyltransf_30"/>
    <property type="match status" value="1"/>
</dbReference>
<dbReference type="SUPFAM" id="SSF51905">
    <property type="entry name" value="FAD/NAD(P)-binding domain"/>
    <property type="match status" value="1"/>
</dbReference>
<protein>
    <recommendedName>
        <fullName evidence="1">tRNA 5-methylaminomethyl-2-thiouridine biosynthesis bifunctional protein MnmC</fullName>
        <shortName evidence="1">tRNA mnm(5)s(2)U biosynthesis bifunctional protein</shortName>
    </recommendedName>
    <domain>
        <recommendedName>
            <fullName evidence="1">tRNA (mnm(5)s(2)U34)-methyltransferase</fullName>
            <ecNumber evidence="1">2.1.1.61</ecNumber>
        </recommendedName>
    </domain>
    <domain>
        <recommendedName>
            <fullName evidence="1">FAD-dependent cmnm(5)s(2)U34 oxidoreductase</fullName>
            <ecNumber evidence="1">1.5.-.-</ecNumber>
        </recommendedName>
    </domain>
</protein>
<accession>A7ZEX8</accession>
<proteinExistence type="inferred from homology"/>
<sequence length="621" mass="69571">MKNANLSFKGQIPFNEEFDDIYFNTEKPWLESEFVFTSALDEIWQSKDSFIVAETGFGAGLNFFTLCKKFKNSSKKLHFVSIEKSPIKKEDLLKIYENLGIFKAYVKKLVSLYPPLISGIHRINFAPNITLDLCYGEADQILPELDFAADIWFLDGFAPSKNGSIWSEDVFKQIARLSRVGTIARTYSCAKIVKVGLKNAGFLLSLKEGYARKRQMSSAVLEKKDENLKDAWFARCEPVGSVNGKTALVIGTGVAGLATAGELAKNGFKVVIAEAKSEVATNGSGNHCGALMPLVTKPGVNLGRMHINAFLQAVRFYKANLPKSLIKFNGCIDYAFDDELVKRYSSWQDQSAEDLFKFNESLKPYPGIFIKEAAYARPREICKFLSSNFEILFNHEYESRAHLQNGKISVKFKNKKSLETDILVFCTGSKSSEIFKDYDMQISSVRGQVTHLKPVLKNELPLSAKGYICPAVKGVQVIGATYARNEICDTPKDEDNAKNLSDVSEFFDTTKAAIIGSRVGYRSYSGDRFPIIGALHDEEFYKQNYKGLFWSKNKDNNPKASYEKNVFVNFAHGSRGLGTAILGANLITDLVLARPLCIERSLFFELHPARFLIRKLKKGLK</sequence>
<reference key="1">
    <citation type="submission" date="2007-10" db="EMBL/GenBank/DDBJ databases">
        <title>Genome sequence of Campylobacter concisus 13826 isolated from human feces.</title>
        <authorList>
            <person name="Fouts D.E."/>
            <person name="Mongodin E.F."/>
            <person name="Puiu D."/>
            <person name="Sebastian Y."/>
            <person name="Miller W.G."/>
            <person name="Mandrell R.E."/>
            <person name="On S."/>
            <person name="Nelson K.E."/>
        </authorList>
    </citation>
    <scope>NUCLEOTIDE SEQUENCE [LARGE SCALE GENOMIC DNA]</scope>
    <source>
        <strain>13826</strain>
    </source>
</reference>
<gene>
    <name evidence="1" type="primary">mnmC</name>
    <name type="ordered locus">Ccon26_14890</name>
    <name type="ORF">CCC13826_0496</name>
</gene>
<keyword id="KW-0963">Cytoplasm</keyword>
<keyword id="KW-0274">FAD</keyword>
<keyword id="KW-0285">Flavoprotein</keyword>
<keyword id="KW-0489">Methyltransferase</keyword>
<keyword id="KW-0511">Multifunctional enzyme</keyword>
<keyword id="KW-0560">Oxidoreductase</keyword>
<keyword id="KW-0949">S-adenosyl-L-methionine</keyword>
<keyword id="KW-0808">Transferase</keyword>
<keyword id="KW-0819">tRNA processing</keyword>
<name>MNMC_CAMC1</name>
<evidence type="ECO:0000255" key="1">
    <source>
        <dbReference type="HAMAP-Rule" id="MF_01102"/>
    </source>
</evidence>
<organism>
    <name type="scientific">Campylobacter concisus (strain 13826)</name>
    <dbReference type="NCBI Taxonomy" id="360104"/>
    <lineage>
        <taxon>Bacteria</taxon>
        <taxon>Pseudomonadati</taxon>
        <taxon>Campylobacterota</taxon>
        <taxon>Epsilonproteobacteria</taxon>
        <taxon>Campylobacterales</taxon>
        <taxon>Campylobacteraceae</taxon>
        <taxon>Campylobacter</taxon>
    </lineage>
</organism>